<protein>
    <recommendedName>
        <fullName evidence="1">Large ribosomal subunit protein bL19</fullName>
    </recommendedName>
    <alternativeName>
        <fullName evidence="2">50S ribosomal protein L19</fullName>
    </alternativeName>
</protein>
<name>RL19_EDWI9</name>
<proteinExistence type="inferred from homology"/>
<sequence length="115" mass="13128">MNNIIKQIEQEQMKQDVPAFRPGDSVEVKVWVVEGSKKRLQAFEGVVIAIRNRGLHSAFTVRKISNGEGVERVFQTHSPVIDSIAVKRRGAVRKAKLYYLRERTGKAARIKERLN</sequence>
<gene>
    <name evidence="1" type="primary">rplS</name>
    <name type="ordered locus">NT01EI_3220</name>
</gene>
<feature type="chain" id="PRO_1000205888" description="Large ribosomal subunit protein bL19">
    <location>
        <begin position="1"/>
        <end position="115"/>
    </location>
</feature>
<reference key="1">
    <citation type="submission" date="2009-03" db="EMBL/GenBank/DDBJ databases">
        <title>Complete genome sequence of Edwardsiella ictaluri 93-146.</title>
        <authorList>
            <person name="Williams M.L."/>
            <person name="Gillaspy A.F."/>
            <person name="Dyer D.W."/>
            <person name="Thune R.L."/>
            <person name="Waldbieser G.C."/>
            <person name="Schuster S.C."/>
            <person name="Gipson J."/>
            <person name="Zaitshik J."/>
            <person name="Landry C."/>
            <person name="Lawrence M.L."/>
        </authorList>
    </citation>
    <scope>NUCLEOTIDE SEQUENCE [LARGE SCALE GENOMIC DNA]</scope>
    <source>
        <strain>93-146</strain>
    </source>
</reference>
<dbReference type="EMBL" id="CP001600">
    <property type="protein sequence ID" value="ACR70365.1"/>
    <property type="molecule type" value="Genomic_DNA"/>
</dbReference>
<dbReference type="RefSeq" id="WP_015872450.1">
    <property type="nucleotide sequence ID" value="NZ_CP169062.1"/>
</dbReference>
<dbReference type="SMR" id="C5BGF9"/>
<dbReference type="STRING" id="67780.B6E78_07740"/>
<dbReference type="GeneID" id="69540086"/>
<dbReference type="KEGG" id="eic:NT01EI_3220"/>
<dbReference type="HOGENOM" id="CLU_103507_2_1_6"/>
<dbReference type="OrthoDB" id="9803541at2"/>
<dbReference type="Proteomes" id="UP000001485">
    <property type="component" value="Chromosome"/>
</dbReference>
<dbReference type="GO" id="GO:0022625">
    <property type="term" value="C:cytosolic large ribosomal subunit"/>
    <property type="evidence" value="ECO:0007669"/>
    <property type="project" value="TreeGrafter"/>
</dbReference>
<dbReference type="GO" id="GO:0003735">
    <property type="term" value="F:structural constituent of ribosome"/>
    <property type="evidence" value="ECO:0007669"/>
    <property type="project" value="InterPro"/>
</dbReference>
<dbReference type="GO" id="GO:0006412">
    <property type="term" value="P:translation"/>
    <property type="evidence" value="ECO:0007669"/>
    <property type="project" value="UniProtKB-UniRule"/>
</dbReference>
<dbReference type="FunFam" id="2.30.30.790:FF:000001">
    <property type="entry name" value="50S ribosomal protein L19"/>
    <property type="match status" value="1"/>
</dbReference>
<dbReference type="Gene3D" id="2.30.30.790">
    <property type="match status" value="1"/>
</dbReference>
<dbReference type="HAMAP" id="MF_00402">
    <property type="entry name" value="Ribosomal_bL19"/>
    <property type="match status" value="1"/>
</dbReference>
<dbReference type="InterPro" id="IPR001857">
    <property type="entry name" value="Ribosomal_bL19"/>
</dbReference>
<dbReference type="InterPro" id="IPR018257">
    <property type="entry name" value="Ribosomal_bL19_CS"/>
</dbReference>
<dbReference type="InterPro" id="IPR038657">
    <property type="entry name" value="Ribosomal_bL19_sf"/>
</dbReference>
<dbReference type="InterPro" id="IPR008991">
    <property type="entry name" value="Translation_prot_SH3-like_sf"/>
</dbReference>
<dbReference type="NCBIfam" id="TIGR01024">
    <property type="entry name" value="rplS_bact"/>
    <property type="match status" value="1"/>
</dbReference>
<dbReference type="PANTHER" id="PTHR15680:SF9">
    <property type="entry name" value="LARGE RIBOSOMAL SUBUNIT PROTEIN BL19M"/>
    <property type="match status" value="1"/>
</dbReference>
<dbReference type="PANTHER" id="PTHR15680">
    <property type="entry name" value="RIBOSOMAL PROTEIN L19"/>
    <property type="match status" value="1"/>
</dbReference>
<dbReference type="Pfam" id="PF01245">
    <property type="entry name" value="Ribosomal_L19"/>
    <property type="match status" value="1"/>
</dbReference>
<dbReference type="PIRSF" id="PIRSF002191">
    <property type="entry name" value="Ribosomal_L19"/>
    <property type="match status" value="1"/>
</dbReference>
<dbReference type="PRINTS" id="PR00061">
    <property type="entry name" value="RIBOSOMALL19"/>
</dbReference>
<dbReference type="SUPFAM" id="SSF50104">
    <property type="entry name" value="Translation proteins SH3-like domain"/>
    <property type="match status" value="1"/>
</dbReference>
<dbReference type="PROSITE" id="PS01015">
    <property type="entry name" value="RIBOSOMAL_L19"/>
    <property type="match status" value="1"/>
</dbReference>
<evidence type="ECO:0000255" key="1">
    <source>
        <dbReference type="HAMAP-Rule" id="MF_00402"/>
    </source>
</evidence>
<evidence type="ECO:0000305" key="2"/>
<keyword id="KW-0687">Ribonucleoprotein</keyword>
<keyword id="KW-0689">Ribosomal protein</keyword>
<accession>C5BGF9</accession>
<comment type="function">
    <text evidence="1">This protein is located at the 30S-50S ribosomal subunit interface and may play a role in the structure and function of the aminoacyl-tRNA binding site.</text>
</comment>
<comment type="similarity">
    <text evidence="1">Belongs to the bacterial ribosomal protein bL19 family.</text>
</comment>
<organism>
    <name type="scientific">Edwardsiella ictaluri (strain 93-146)</name>
    <dbReference type="NCBI Taxonomy" id="634503"/>
    <lineage>
        <taxon>Bacteria</taxon>
        <taxon>Pseudomonadati</taxon>
        <taxon>Pseudomonadota</taxon>
        <taxon>Gammaproteobacteria</taxon>
        <taxon>Enterobacterales</taxon>
        <taxon>Hafniaceae</taxon>
        <taxon>Edwardsiella</taxon>
    </lineage>
</organism>